<reference key="1">
    <citation type="journal article" date="2004" name="Science">
        <title>Illuminating the evolutionary history of chlamydiae.</title>
        <authorList>
            <person name="Horn M."/>
            <person name="Collingro A."/>
            <person name="Schmitz-Esser S."/>
            <person name="Beier C.L."/>
            <person name="Purkhold U."/>
            <person name="Fartmann B."/>
            <person name="Brandt P."/>
            <person name="Nyakatura G.J."/>
            <person name="Droege M."/>
            <person name="Frishman D."/>
            <person name="Rattei T."/>
            <person name="Mewes H.-W."/>
            <person name="Wagner M."/>
        </authorList>
    </citation>
    <scope>NUCLEOTIDE SEQUENCE [LARGE SCALE GENOMIC DNA]</scope>
    <source>
        <strain>UWE25</strain>
    </source>
</reference>
<keyword id="KW-0520">NAD</keyword>
<keyword id="KW-0560">Oxidoreductase</keyword>
<keyword id="KW-1185">Reference proteome</keyword>
<keyword id="KW-0816">Tricarboxylic acid cycle</keyword>
<evidence type="ECO:0000255" key="1">
    <source>
        <dbReference type="HAMAP-Rule" id="MF_01517"/>
    </source>
</evidence>
<protein>
    <recommendedName>
        <fullName evidence="1">Malate dehydrogenase</fullName>
        <ecNumber evidence="1">1.1.1.37</ecNumber>
    </recommendedName>
</protein>
<gene>
    <name evidence="1" type="primary">mdh</name>
    <name type="ordered locus">pc1772</name>
</gene>
<name>MDH_PARUW</name>
<organism>
    <name type="scientific">Protochlamydia amoebophila (strain UWE25)</name>
    <dbReference type="NCBI Taxonomy" id="264201"/>
    <lineage>
        <taxon>Bacteria</taxon>
        <taxon>Pseudomonadati</taxon>
        <taxon>Chlamydiota</taxon>
        <taxon>Chlamydiia</taxon>
        <taxon>Parachlamydiales</taxon>
        <taxon>Parachlamydiaceae</taxon>
        <taxon>Candidatus Protochlamydia</taxon>
    </lineage>
</organism>
<comment type="function">
    <text evidence="1">Catalyzes the reversible oxidation of malate to oxaloacetate.</text>
</comment>
<comment type="catalytic activity">
    <reaction evidence="1">
        <text>(S)-malate + NAD(+) = oxaloacetate + NADH + H(+)</text>
        <dbReference type="Rhea" id="RHEA:21432"/>
        <dbReference type="ChEBI" id="CHEBI:15378"/>
        <dbReference type="ChEBI" id="CHEBI:15589"/>
        <dbReference type="ChEBI" id="CHEBI:16452"/>
        <dbReference type="ChEBI" id="CHEBI:57540"/>
        <dbReference type="ChEBI" id="CHEBI:57945"/>
        <dbReference type="EC" id="1.1.1.37"/>
    </reaction>
</comment>
<comment type="similarity">
    <text evidence="1">Belongs to the LDH/MDH superfamily. MDH type 2 family.</text>
</comment>
<dbReference type="EC" id="1.1.1.37" evidence="1"/>
<dbReference type="EMBL" id="BX908798">
    <property type="protein sequence ID" value="CAF24496.1"/>
    <property type="molecule type" value="Genomic_DNA"/>
</dbReference>
<dbReference type="RefSeq" id="WP_011176317.1">
    <property type="nucleotide sequence ID" value="NC_005861.2"/>
</dbReference>
<dbReference type="SMR" id="Q6MAA3"/>
<dbReference type="STRING" id="264201.pc1772"/>
<dbReference type="KEGG" id="pcu:PC_RS08490"/>
<dbReference type="eggNOG" id="COG0039">
    <property type="taxonomic scope" value="Bacteria"/>
</dbReference>
<dbReference type="HOGENOM" id="CLU_040727_2_0_0"/>
<dbReference type="OrthoDB" id="9802969at2"/>
<dbReference type="Proteomes" id="UP000000529">
    <property type="component" value="Chromosome"/>
</dbReference>
<dbReference type="GO" id="GO:0030060">
    <property type="term" value="F:L-malate dehydrogenase (NAD+) activity"/>
    <property type="evidence" value="ECO:0007669"/>
    <property type="project" value="UniProtKB-UniRule"/>
</dbReference>
<dbReference type="GO" id="GO:0006108">
    <property type="term" value="P:malate metabolic process"/>
    <property type="evidence" value="ECO:0007669"/>
    <property type="project" value="InterPro"/>
</dbReference>
<dbReference type="GO" id="GO:0006099">
    <property type="term" value="P:tricarboxylic acid cycle"/>
    <property type="evidence" value="ECO:0007669"/>
    <property type="project" value="UniProtKB-UniRule"/>
</dbReference>
<dbReference type="CDD" id="cd01338">
    <property type="entry name" value="MDH_chloroplast-like"/>
    <property type="match status" value="1"/>
</dbReference>
<dbReference type="FunFam" id="3.40.50.720:FF:000010">
    <property type="entry name" value="Malate dehydrogenase"/>
    <property type="match status" value="1"/>
</dbReference>
<dbReference type="FunFam" id="3.90.110.10:FF:000002">
    <property type="entry name" value="Malate dehydrogenase"/>
    <property type="match status" value="1"/>
</dbReference>
<dbReference type="Gene3D" id="3.90.110.10">
    <property type="entry name" value="Lactate dehydrogenase/glycoside hydrolase, family 4, C-terminal"/>
    <property type="match status" value="1"/>
</dbReference>
<dbReference type="Gene3D" id="3.40.50.720">
    <property type="entry name" value="NAD(P)-binding Rossmann-like Domain"/>
    <property type="match status" value="1"/>
</dbReference>
<dbReference type="HAMAP" id="MF_01517">
    <property type="entry name" value="Malate_dehydrog_2"/>
    <property type="match status" value="1"/>
</dbReference>
<dbReference type="InterPro" id="IPR001557">
    <property type="entry name" value="L-lactate/malate_DH"/>
</dbReference>
<dbReference type="InterPro" id="IPR022383">
    <property type="entry name" value="Lactate/malate_DH_C"/>
</dbReference>
<dbReference type="InterPro" id="IPR001236">
    <property type="entry name" value="Lactate/malate_DH_N"/>
</dbReference>
<dbReference type="InterPro" id="IPR015955">
    <property type="entry name" value="Lactate_DH/Glyco_Ohase_4_C"/>
</dbReference>
<dbReference type="InterPro" id="IPR001252">
    <property type="entry name" value="Malate_DH_AS"/>
</dbReference>
<dbReference type="InterPro" id="IPR010945">
    <property type="entry name" value="Malate_DH_type2"/>
</dbReference>
<dbReference type="InterPro" id="IPR036291">
    <property type="entry name" value="NAD(P)-bd_dom_sf"/>
</dbReference>
<dbReference type="NCBIfam" id="TIGR01759">
    <property type="entry name" value="MalateDH-SF1"/>
    <property type="match status" value="1"/>
</dbReference>
<dbReference type="NCBIfam" id="NF003916">
    <property type="entry name" value="PRK05442.1"/>
    <property type="match status" value="1"/>
</dbReference>
<dbReference type="PANTHER" id="PTHR23382">
    <property type="entry name" value="MALATE DEHYDROGENASE"/>
    <property type="match status" value="1"/>
</dbReference>
<dbReference type="Pfam" id="PF02866">
    <property type="entry name" value="Ldh_1_C"/>
    <property type="match status" value="1"/>
</dbReference>
<dbReference type="Pfam" id="PF00056">
    <property type="entry name" value="Ldh_1_N"/>
    <property type="match status" value="1"/>
</dbReference>
<dbReference type="PIRSF" id="PIRSF000102">
    <property type="entry name" value="Lac_mal_DH"/>
    <property type="match status" value="1"/>
</dbReference>
<dbReference type="SUPFAM" id="SSF56327">
    <property type="entry name" value="LDH C-terminal domain-like"/>
    <property type="match status" value="1"/>
</dbReference>
<dbReference type="SUPFAM" id="SSF51735">
    <property type="entry name" value="NAD(P)-binding Rossmann-fold domains"/>
    <property type="match status" value="1"/>
</dbReference>
<dbReference type="PROSITE" id="PS00068">
    <property type="entry name" value="MDH"/>
    <property type="match status" value="1"/>
</dbReference>
<sequence>MSQPIKIAISGGAGQIAYSLLFRLASGELFGPNQLIELQVLEVPNALSALEGVKMEIEDCAFPLLSSIKICSDPYQAFEDIDYALLIGAKSRGPGMERRDLLQENSKIFVNQGQALNAVAKSSAKIFVVGNPCNTNCLIALNNAPSLKRENFYAMTRLDQNRATFFLSQKSQVSTKDVSCVTIWGNHSATQVPDFVNAKISQKPVETIIPDRQWLEKDFIESVQKRGAAIIQARGKSSAASAASALLDAMRDRILPTPTGQWFSTALLSDGNPYGIEEGLIFSFPCRVKKNGELSIVSGLKWDAFLEEKIKLTEQELKEEREMVSSILKI</sequence>
<feature type="chain" id="PRO_0000113384" description="Malate dehydrogenase">
    <location>
        <begin position="1"/>
        <end position="330"/>
    </location>
</feature>
<feature type="active site" description="Proton acceptor" evidence="1">
    <location>
        <position position="187"/>
    </location>
</feature>
<feature type="binding site" evidence="1">
    <location>
        <begin position="11"/>
        <end position="17"/>
    </location>
    <ligand>
        <name>NAD(+)</name>
        <dbReference type="ChEBI" id="CHEBI:57540"/>
    </ligand>
</feature>
<feature type="binding site" evidence="1">
    <location>
        <position position="92"/>
    </location>
    <ligand>
        <name>substrate</name>
    </ligand>
</feature>
<feature type="binding site" evidence="1">
    <location>
        <position position="98"/>
    </location>
    <ligand>
        <name>substrate</name>
    </ligand>
</feature>
<feature type="binding site" evidence="1">
    <location>
        <position position="105"/>
    </location>
    <ligand>
        <name>NAD(+)</name>
        <dbReference type="ChEBI" id="CHEBI:57540"/>
    </ligand>
</feature>
<feature type="binding site" evidence="1">
    <location>
        <position position="112"/>
    </location>
    <ligand>
        <name>NAD(+)</name>
        <dbReference type="ChEBI" id="CHEBI:57540"/>
    </ligand>
</feature>
<feature type="binding site" evidence="1">
    <location>
        <begin position="129"/>
        <end position="131"/>
    </location>
    <ligand>
        <name>NAD(+)</name>
        <dbReference type="ChEBI" id="CHEBI:57540"/>
    </ligand>
</feature>
<feature type="binding site" evidence="1">
    <location>
        <position position="131"/>
    </location>
    <ligand>
        <name>substrate</name>
    </ligand>
</feature>
<feature type="binding site" evidence="1">
    <location>
        <position position="162"/>
    </location>
    <ligand>
        <name>substrate</name>
    </ligand>
</feature>
<proteinExistence type="inferred from homology"/>
<accession>Q6MAA3</accession>